<evidence type="ECO:0000255" key="1">
    <source>
        <dbReference type="HAMAP-Rule" id="MF_00259"/>
    </source>
</evidence>
<keyword id="KW-0032">Aminotransferase</keyword>
<keyword id="KW-1185">Reference proteome</keyword>
<keyword id="KW-0808">Transferase</keyword>
<protein>
    <recommendedName>
        <fullName evidence="1">Aminomethyltransferase</fullName>
        <ecNumber evidence="1">2.1.2.10</ecNumber>
    </recommendedName>
    <alternativeName>
        <fullName evidence="1">Glycine cleavage system T protein</fullName>
    </alternativeName>
</protein>
<gene>
    <name evidence="1" type="primary">gcvT</name>
    <name type="ordered locus">BT_4584</name>
</gene>
<dbReference type="EC" id="2.1.2.10" evidence="1"/>
<dbReference type="EMBL" id="AE015928">
    <property type="protein sequence ID" value="AAO79689.1"/>
    <property type="molecule type" value="Genomic_DNA"/>
</dbReference>
<dbReference type="RefSeq" id="NP_813495.1">
    <property type="nucleotide sequence ID" value="NC_004663.1"/>
</dbReference>
<dbReference type="RefSeq" id="WP_008764743.1">
    <property type="nucleotide sequence ID" value="NC_004663.1"/>
</dbReference>
<dbReference type="SMR" id="Q89YZ6"/>
<dbReference type="FunCoup" id="Q89YZ6">
    <property type="interactions" value="506"/>
</dbReference>
<dbReference type="STRING" id="226186.BT_4584"/>
<dbReference type="PaxDb" id="226186-BT_4584"/>
<dbReference type="EnsemblBacteria" id="AAO79689">
    <property type="protein sequence ID" value="AAO79689"/>
    <property type="gene ID" value="BT_4584"/>
</dbReference>
<dbReference type="GeneID" id="60925758"/>
<dbReference type="KEGG" id="bth:BT_4584"/>
<dbReference type="PATRIC" id="fig|226186.12.peg.4664"/>
<dbReference type="eggNOG" id="COG0404">
    <property type="taxonomic scope" value="Bacteria"/>
</dbReference>
<dbReference type="HOGENOM" id="CLU_007884_10_2_10"/>
<dbReference type="InParanoid" id="Q89YZ6"/>
<dbReference type="OrthoDB" id="9774591at2"/>
<dbReference type="Proteomes" id="UP000001414">
    <property type="component" value="Chromosome"/>
</dbReference>
<dbReference type="GO" id="GO:0005829">
    <property type="term" value="C:cytosol"/>
    <property type="evidence" value="ECO:0000318"/>
    <property type="project" value="GO_Central"/>
</dbReference>
<dbReference type="GO" id="GO:0005960">
    <property type="term" value="C:glycine cleavage complex"/>
    <property type="evidence" value="ECO:0007669"/>
    <property type="project" value="InterPro"/>
</dbReference>
<dbReference type="GO" id="GO:0004047">
    <property type="term" value="F:aminomethyltransferase activity"/>
    <property type="evidence" value="ECO:0007669"/>
    <property type="project" value="UniProtKB-UniRule"/>
</dbReference>
<dbReference type="GO" id="GO:0008483">
    <property type="term" value="F:transaminase activity"/>
    <property type="evidence" value="ECO:0007669"/>
    <property type="project" value="UniProtKB-KW"/>
</dbReference>
<dbReference type="GO" id="GO:0019464">
    <property type="term" value="P:glycine decarboxylation via glycine cleavage system"/>
    <property type="evidence" value="ECO:0007669"/>
    <property type="project" value="UniProtKB-UniRule"/>
</dbReference>
<dbReference type="FunFam" id="2.40.30.110:FF:000003">
    <property type="entry name" value="Aminomethyltransferase"/>
    <property type="match status" value="1"/>
</dbReference>
<dbReference type="FunFam" id="3.30.70.1400:FF:000001">
    <property type="entry name" value="Aminomethyltransferase"/>
    <property type="match status" value="1"/>
</dbReference>
<dbReference type="FunFam" id="4.10.1250.10:FF:000001">
    <property type="entry name" value="Aminomethyltransferase"/>
    <property type="match status" value="1"/>
</dbReference>
<dbReference type="Gene3D" id="2.40.30.110">
    <property type="entry name" value="Aminomethyltransferase beta-barrel domains"/>
    <property type="match status" value="1"/>
</dbReference>
<dbReference type="Gene3D" id="3.30.70.1400">
    <property type="entry name" value="Aminomethyltransferase beta-barrel domains"/>
    <property type="match status" value="1"/>
</dbReference>
<dbReference type="Gene3D" id="4.10.1250.10">
    <property type="entry name" value="Aminomethyltransferase fragment"/>
    <property type="match status" value="1"/>
</dbReference>
<dbReference type="Gene3D" id="3.30.1360.120">
    <property type="entry name" value="Probable tRNA modification gtpase trme, domain 1"/>
    <property type="match status" value="1"/>
</dbReference>
<dbReference type="HAMAP" id="MF_00259">
    <property type="entry name" value="GcvT"/>
    <property type="match status" value="1"/>
</dbReference>
<dbReference type="InterPro" id="IPR006223">
    <property type="entry name" value="GCS_T"/>
</dbReference>
<dbReference type="InterPro" id="IPR022903">
    <property type="entry name" value="GCS_T_bac"/>
</dbReference>
<dbReference type="InterPro" id="IPR013977">
    <property type="entry name" value="GCST_C"/>
</dbReference>
<dbReference type="InterPro" id="IPR006222">
    <property type="entry name" value="GCV_T_N"/>
</dbReference>
<dbReference type="InterPro" id="IPR028896">
    <property type="entry name" value="GcvT/YgfZ/DmdA"/>
</dbReference>
<dbReference type="InterPro" id="IPR029043">
    <property type="entry name" value="GcvT/YgfZ_C"/>
</dbReference>
<dbReference type="InterPro" id="IPR027266">
    <property type="entry name" value="TrmE/GcvT_dom1"/>
</dbReference>
<dbReference type="NCBIfam" id="TIGR00528">
    <property type="entry name" value="gcvT"/>
    <property type="match status" value="1"/>
</dbReference>
<dbReference type="NCBIfam" id="NF001567">
    <property type="entry name" value="PRK00389.1"/>
    <property type="match status" value="1"/>
</dbReference>
<dbReference type="PANTHER" id="PTHR43757">
    <property type="entry name" value="AMINOMETHYLTRANSFERASE"/>
    <property type="match status" value="1"/>
</dbReference>
<dbReference type="PANTHER" id="PTHR43757:SF2">
    <property type="entry name" value="AMINOMETHYLTRANSFERASE, MITOCHONDRIAL"/>
    <property type="match status" value="1"/>
</dbReference>
<dbReference type="Pfam" id="PF01571">
    <property type="entry name" value="GCV_T"/>
    <property type="match status" value="1"/>
</dbReference>
<dbReference type="Pfam" id="PF08669">
    <property type="entry name" value="GCV_T_C"/>
    <property type="match status" value="1"/>
</dbReference>
<dbReference type="PIRSF" id="PIRSF006487">
    <property type="entry name" value="GcvT"/>
    <property type="match status" value="1"/>
</dbReference>
<dbReference type="SUPFAM" id="SSF101790">
    <property type="entry name" value="Aminomethyltransferase beta-barrel domain"/>
    <property type="match status" value="1"/>
</dbReference>
<dbReference type="SUPFAM" id="SSF103025">
    <property type="entry name" value="Folate-binding domain"/>
    <property type="match status" value="1"/>
</dbReference>
<name>GCST_BACTN</name>
<feature type="chain" id="PRO_0000122544" description="Aminomethyltransferase">
    <location>
        <begin position="1"/>
        <end position="361"/>
    </location>
</feature>
<accession>Q89YZ6</accession>
<reference key="1">
    <citation type="journal article" date="2003" name="Science">
        <title>A genomic view of the human-Bacteroides thetaiotaomicron symbiosis.</title>
        <authorList>
            <person name="Xu J."/>
            <person name="Bjursell M.K."/>
            <person name="Himrod J."/>
            <person name="Deng S."/>
            <person name="Carmichael L.K."/>
            <person name="Chiang H.C."/>
            <person name="Hooper L.V."/>
            <person name="Gordon J.I."/>
        </authorList>
    </citation>
    <scope>NUCLEOTIDE SEQUENCE [LARGE SCALE GENOMIC DNA]</scope>
    <source>
        <strain>ATCC 29148 / DSM 2079 / JCM 5827 / CCUG 10774 / NCTC 10582 / VPI-5482 / E50</strain>
    </source>
</reference>
<organism>
    <name type="scientific">Bacteroides thetaiotaomicron (strain ATCC 29148 / DSM 2079 / JCM 5827 / CCUG 10774 / NCTC 10582 / VPI-5482 / E50)</name>
    <dbReference type="NCBI Taxonomy" id="226186"/>
    <lineage>
        <taxon>Bacteria</taxon>
        <taxon>Pseudomonadati</taxon>
        <taxon>Bacteroidota</taxon>
        <taxon>Bacteroidia</taxon>
        <taxon>Bacteroidales</taxon>
        <taxon>Bacteroidaceae</taxon>
        <taxon>Bacteroides</taxon>
    </lineage>
</organism>
<sequence>MKTTPFTEKHIALGAKMHEFAGYNMPIEYSGIIDEHLTVCNAVGVFDVSHMGEFWVKGPQALAFLQKVTSNNVAALVPGKIQYTCFPNEEGGIVDDLLVYCYEPEKYLLVVNAANIEKDWNWCVSHNTEGAELENSSDNMAQLAVQGPKAILALQKLTDIDLSAIPYYTFTVGRFAGKENVIISNTGYTGAGGFELYFYPDAAEAIWKAVFEAGEEFGIKPVGLGARDTLRLEMGFCLYGNDLDDKTSPIEAGLGWITKFVEGKEFINRPMLEKQKSEGTTRKLVGFEMIDRGIPRHGYELVNEEGEGIGVVTSGTMSPTRKIGIGMGYVKPEYAKVGTEICIDMRGRKLKAIVVKPPFRK</sequence>
<proteinExistence type="inferred from homology"/>
<comment type="function">
    <text evidence="1">The glycine cleavage system catalyzes the degradation of glycine.</text>
</comment>
<comment type="catalytic activity">
    <reaction evidence="1">
        <text>N(6)-[(R)-S(8)-aminomethyldihydrolipoyl]-L-lysyl-[protein] + (6S)-5,6,7,8-tetrahydrofolate = N(6)-[(R)-dihydrolipoyl]-L-lysyl-[protein] + (6R)-5,10-methylene-5,6,7,8-tetrahydrofolate + NH4(+)</text>
        <dbReference type="Rhea" id="RHEA:16945"/>
        <dbReference type="Rhea" id="RHEA-COMP:10475"/>
        <dbReference type="Rhea" id="RHEA-COMP:10492"/>
        <dbReference type="ChEBI" id="CHEBI:15636"/>
        <dbReference type="ChEBI" id="CHEBI:28938"/>
        <dbReference type="ChEBI" id="CHEBI:57453"/>
        <dbReference type="ChEBI" id="CHEBI:83100"/>
        <dbReference type="ChEBI" id="CHEBI:83143"/>
        <dbReference type="EC" id="2.1.2.10"/>
    </reaction>
</comment>
<comment type="subunit">
    <text evidence="1">The glycine cleavage system is composed of four proteins: P, T, L and H.</text>
</comment>
<comment type="similarity">
    <text evidence="1">Belongs to the GcvT family.</text>
</comment>